<comment type="function">
    <text evidence="1">Component of the NuA4 histone acetyltransferase complex which is involved in transcriptional activation of selected genes principally by acetylation of nucleosomal histone H4 and H2A. The NuA4 complex is also involved in DNA repair (By similarity).</text>
</comment>
<comment type="subunit">
    <text evidence="1">Component of the NuA4 histone acetyltransferase complex.</text>
</comment>
<comment type="subcellular location">
    <subcellularLocation>
        <location evidence="1">Nucleus</location>
    </subcellularLocation>
</comment>
<comment type="similarity">
    <text evidence="3">Belongs to the EAF5 family.</text>
</comment>
<feature type="chain" id="PRO_0000086891" description="Chromatin modification-related protein EAF5">
    <location>
        <begin position="1"/>
        <end position="275"/>
    </location>
</feature>
<feature type="region of interest" description="Disordered" evidence="2">
    <location>
        <begin position="107"/>
        <end position="169"/>
    </location>
</feature>
<feature type="compositionally biased region" description="Low complexity" evidence="2">
    <location>
        <begin position="115"/>
        <end position="166"/>
    </location>
</feature>
<organism>
    <name type="scientific">Kluyveromyces lactis (strain ATCC 8585 / CBS 2359 / DSM 70799 / NBRC 1267 / NRRL Y-1140 / WM37)</name>
    <name type="common">Yeast</name>
    <name type="synonym">Candida sphaerica</name>
    <dbReference type="NCBI Taxonomy" id="284590"/>
    <lineage>
        <taxon>Eukaryota</taxon>
        <taxon>Fungi</taxon>
        <taxon>Dikarya</taxon>
        <taxon>Ascomycota</taxon>
        <taxon>Saccharomycotina</taxon>
        <taxon>Saccharomycetes</taxon>
        <taxon>Saccharomycetales</taxon>
        <taxon>Saccharomycetaceae</taxon>
        <taxon>Kluyveromyces</taxon>
    </lineage>
</organism>
<keyword id="KW-0156">Chromatin regulator</keyword>
<keyword id="KW-0227">DNA damage</keyword>
<keyword id="KW-0234">DNA repair</keyword>
<keyword id="KW-0539">Nucleus</keyword>
<keyword id="KW-1185">Reference proteome</keyword>
<keyword id="KW-0804">Transcription</keyword>
<keyword id="KW-0805">Transcription regulation</keyword>
<accession>Q6CX42</accession>
<dbReference type="EMBL" id="CR382121">
    <property type="protein sequence ID" value="CAH03085.1"/>
    <property type="molecule type" value="Genomic_DNA"/>
</dbReference>
<dbReference type="RefSeq" id="XP_451497.1">
    <property type="nucleotide sequence ID" value="XM_451497.1"/>
</dbReference>
<dbReference type="FunCoup" id="Q6CX42">
    <property type="interactions" value="134"/>
</dbReference>
<dbReference type="STRING" id="284590.Q6CX42"/>
<dbReference type="PaxDb" id="284590-Q6CX42"/>
<dbReference type="KEGG" id="kla:KLLA0_A11440g"/>
<dbReference type="eggNOG" id="ENOG502S0AH">
    <property type="taxonomic scope" value="Eukaryota"/>
</dbReference>
<dbReference type="HOGENOM" id="CLU_071344_0_0_1"/>
<dbReference type="InParanoid" id="Q6CX42"/>
<dbReference type="OMA" id="IIEIEMI"/>
<dbReference type="Proteomes" id="UP000000598">
    <property type="component" value="Chromosome A"/>
</dbReference>
<dbReference type="GO" id="GO:0005634">
    <property type="term" value="C:nucleus"/>
    <property type="evidence" value="ECO:0007669"/>
    <property type="project" value="UniProtKB-SubCell"/>
</dbReference>
<dbReference type="GO" id="GO:0006325">
    <property type="term" value="P:chromatin organization"/>
    <property type="evidence" value="ECO:0007669"/>
    <property type="project" value="UniProtKB-KW"/>
</dbReference>
<dbReference type="GO" id="GO:0006281">
    <property type="term" value="P:DNA repair"/>
    <property type="evidence" value="ECO:0007669"/>
    <property type="project" value="UniProtKB-KW"/>
</dbReference>
<dbReference type="InterPro" id="IPR026226">
    <property type="entry name" value="EAF5"/>
</dbReference>
<dbReference type="PRINTS" id="PR02067">
    <property type="entry name" value="PROTEINEAF5"/>
</dbReference>
<sequence>MFKEFLLLDVLYDELLNSQTNKVSLIRLRTGFNDHKIHKFTRMEDIKINEILDMIKEMFPNQTSLNDGQITFYHLQINEIQNKIMDVYERCQRDLVGKLAKNEKELKRGKVGKVSHTGSNGNKSNSSSSSSSTSAISNGAGAAGATTHSVLSTPAASTSTTTNNSSKVDYMKSRRGKILAMYRDTVIAKLESFEQFKEVFSSFEKVNHNEVIKMENDLKKLKTLHLNNLIDLQWNLQNCVTNGIMSMGHEDTNRVLLAQDELDMTINFVRNAMDN</sequence>
<proteinExistence type="inferred from homology"/>
<reference key="1">
    <citation type="journal article" date="2004" name="Nature">
        <title>Genome evolution in yeasts.</title>
        <authorList>
            <person name="Dujon B."/>
            <person name="Sherman D."/>
            <person name="Fischer G."/>
            <person name="Durrens P."/>
            <person name="Casaregola S."/>
            <person name="Lafontaine I."/>
            <person name="de Montigny J."/>
            <person name="Marck C."/>
            <person name="Neuveglise C."/>
            <person name="Talla E."/>
            <person name="Goffard N."/>
            <person name="Frangeul L."/>
            <person name="Aigle M."/>
            <person name="Anthouard V."/>
            <person name="Babour A."/>
            <person name="Barbe V."/>
            <person name="Barnay S."/>
            <person name="Blanchin S."/>
            <person name="Beckerich J.-M."/>
            <person name="Beyne E."/>
            <person name="Bleykasten C."/>
            <person name="Boisrame A."/>
            <person name="Boyer J."/>
            <person name="Cattolico L."/>
            <person name="Confanioleri F."/>
            <person name="de Daruvar A."/>
            <person name="Despons L."/>
            <person name="Fabre E."/>
            <person name="Fairhead C."/>
            <person name="Ferry-Dumazet H."/>
            <person name="Groppi A."/>
            <person name="Hantraye F."/>
            <person name="Hennequin C."/>
            <person name="Jauniaux N."/>
            <person name="Joyet P."/>
            <person name="Kachouri R."/>
            <person name="Kerrest A."/>
            <person name="Koszul R."/>
            <person name="Lemaire M."/>
            <person name="Lesur I."/>
            <person name="Ma L."/>
            <person name="Muller H."/>
            <person name="Nicaud J.-M."/>
            <person name="Nikolski M."/>
            <person name="Oztas S."/>
            <person name="Ozier-Kalogeropoulos O."/>
            <person name="Pellenz S."/>
            <person name="Potier S."/>
            <person name="Richard G.-F."/>
            <person name="Straub M.-L."/>
            <person name="Suleau A."/>
            <person name="Swennen D."/>
            <person name="Tekaia F."/>
            <person name="Wesolowski-Louvel M."/>
            <person name="Westhof E."/>
            <person name="Wirth B."/>
            <person name="Zeniou-Meyer M."/>
            <person name="Zivanovic Y."/>
            <person name="Bolotin-Fukuhara M."/>
            <person name="Thierry A."/>
            <person name="Bouchier C."/>
            <person name="Caudron B."/>
            <person name="Scarpelli C."/>
            <person name="Gaillardin C."/>
            <person name="Weissenbach J."/>
            <person name="Wincker P."/>
            <person name="Souciet J.-L."/>
        </authorList>
    </citation>
    <scope>NUCLEOTIDE SEQUENCE [LARGE SCALE GENOMIC DNA]</scope>
    <source>
        <strain>ATCC 8585 / CBS 2359 / DSM 70799 / NBRC 1267 / NRRL Y-1140 / WM37</strain>
    </source>
</reference>
<evidence type="ECO:0000250" key="1"/>
<evidence type="ECO:0000256" key="2">
    <source>
        <dbReference type="SAM" id="MobiDB-lite"/>
    </source>
</evidence>
<evidence type="ECO:0000305" key="3"/>
<protein>
    <recommendedName>
        <fullName>Chromatin modification-related protein EAF5</fullName>
    </recommendedName>
</protein>
<gene>
    <name type="primary">EAF5</name>
    <name type="ordered locus">KLLA0A11440g</name>
</gene>
<name>EAF5_KLULA</name>